<name>DHSD_RICTY</name>
<sequence length="125" mass="14523">MIYDFKAEIIKSKSSSSSKSGAHHWLLQRVTGVVLALCSFWLIYFMFTNKNNDINIIMWEFKKPFNIVILLITVTISLYHSVLGMRVVIEDYINCHKLRNTLIIIVKLFCILTIVAFIVAIFYSE</sequence>
<dbReference type="EMBL" id="AE017197">
    <property type="protein sequence ID" value="AAU03602.1"/>
    <property type="molecule type" value="Genomic_DNA"/>
</dbReference>
<dbReference type="RefSeq" id="WP_011190589.1">
    <property type="nucleotide sequence ID" value="NC_006142.1"/>
</dbReference>
<dbReference type="SMR" id="Q68XP0"/>
<dbReference type="KEGG" id="rty:RT0116"/>
<dbReference type="eggNOG" id="COG2142">
    <property type="taxonomic scope" value="Bacteria"/>
</dbReference>
<dbReference type="HOGENOM" id="CLU_151315_0_2_5"/>
<dbReference type="OrthoDB" id="9809280at2"/>
<dbReference type="UniPathway" id="UPA00223"/>
<dbReference type="Proteomes" id="UP000000604">
    <property type="component" value="Chromosome"/>
</dbReference>
<dbReference type="GO" id="GO:0005886">
    <property type="term" value="C:plasma membrane"/>
    <property type="evidence" value="ECO:0007669"/>
    <property type="project" value="UniProtKB-SubCell"/>
</dbReference>
<dbReference type="GO" id="GO:0009055">
    <property type="term" value="F:electron transfer activity"/>
    <property type="evidence" value="ECO:0007669"/>
    <property type="project" value="TreeGrafter"/>
</dbReference>
<dbReference type="GO" id="GO:0020037">
    <property type="term" value="F:heme binding"/>
    <property type="evidence" value="ECO:0007669"/>
    <property type="project" value="InterPro"/>
</dbReference>
<dbReference type="GO" id="GO:0046872">
    <property type="term" value="F:metal ion binding"/>
    <property type="evidence" value="ECO:0007669"/>
    <property type="project" value="UniProtKB-KW"/>
</dbReference>
<dbReference type="GO" id="GO:0017004">
    <property type="term" value="P:cytochrome complex assembly"/>
    <property type="evidence" value="ECO:0007669"/>
    <property type="project" value="TreeGrafter"/>
</dbReference>
<dbReference type="GO" id="GO:0006099">
    <property type="term" value="P:tricarboxylic acid cycle"/>
    <property type="evidence" value="ECO:0007669"/>
    <property type="project" value="UniProtKB-UniPathway"/>
</dbReference>
<dbReference type="CDD" id="cd03495">
    <property type="entry name" value="SQR_TypeC_SdhD_like"/>
    <property type="match status" value="1"/>
</dbReference>
<dbReference type="Gene3D" id="1.20.1300.10">
    <property type="entry name" value="Fumarate reductase/succinate dehydrogenase, transmembrane subunit"/>
    <property type="match status" value="1"/>
</dbReference>
<dbReference type="InterPro" id="IPR034804">
    <property type="entry name" value="SQR/QFR_C/D"/>
</dbReference>
<dbReference type="InterPro" id="IPR014312">
    <property type="entry name" value="Succ_DH_anchor"/>
</dbReference>
<dbReference type="InterPro" id="IPR000701">
    <property type="entry name" value="SuccDH_FuR_B_TM-su"/>
</dbReference>
<dbReference type="NCBIfam" id="TIGR02968">
    <property type="entry name" value="succ_dehyd_anc"/>
    <property type="match status" value="1"/>
</dbReference>
<dbReference type="PANTHER" id="PTHR38689">
    <property type="entry name" value="SUCCINATE DEHYDROGENASE HYDROPHOBIC MEMBRANE ANCHOR SUBUNIT"/>
    <property type="match status" value="1"/>
</dbReference>
<dbReference type="PANTHER" id="PTHR38689:SF1">
    <property type="entry name" value="SUCCINATE DEHYDROGENASE HYDROPHOBIC MEMBRANE ANCHOR SUBUNIT"/>
    <property type="match status" value="1"/>
</dbReference>
<dbReference type="Pfam" id="PF01127">
    <property type="entry name" value="Sdh_cyt"/>
    <property type="match status" value="1"/>
</dbReference>
<dbReference type="SUPFAM" id="SSF81343">
    <property type="entry name" value="Fumarate reductase respiratory complex transmembrane subunits"/>
    <property type="match status" value="1"/>
</dbReference>
<gene>
    <name type="primary">sdhD</name>
    <name type="ordered locus">RT0116</name>
</gene>
<reference key="1">
    <citation type="journal article" date="2004" name="J. Bacteriol.">
        <title>Complete genome sequence of Rickettsia typhi and comparison with sequences of other Rickettsiae.</title>
        <authorList>
            <person name="McLeod M.P."/>
            <person name="Qin X."/>
            <person name="Karpathy S.E."/>
            <person name="Gioia J."/>
            <person name="Highlander S.K."/>
            <person name="Fox G.E."/>
            <person name="McNeill T.Z."/>
            <person name="Jiang H."/>
            <person name="Muzny D."/>
            <person name="Jacob L.S."/>
            <person name="Hawes A.C."/>
            <person name="Sodergren E."/>
            <person name="Gill R."/>
            <person name="Hume J."/>
            <person name="Morgan M."/>
            <person name="Fan G."/>
            <person name="Amin A.G."/>
            <person name="Gibbs R.A."/>
            <person name="Hong C."/>
            <person name="Yu X.-J."/>
            <person name="Walker D.H."/>
            <person name="Weinstock G.M."/>
        </authorList>
    </citation>
    <scope>NUCLEOTIDE SEQUENCE [LARGE SCALE GENOMIC DNA]</scope>
    <source>
        <strain>ATCC VR-144 / Wilmington</strain>
    </source>
</reference>
<protein>
    <recommendedName>
        <fullName>Succinate dehydrogenase hydrophobic membrane anchor subunit</fullName>
    </recommendedName>
</protein>
<comment type="function">
    <text evidence="1">Membrane-anchoring subunit of succinate dehydrogenase (SDH).</text>
</comment>
<comment type="cofactor">
    <cofactor evidence="1">
        <name>heme</name>
        <dbReference type="ChEBI" id="CHEBI:30413"/>
    </cofactor>
    <text evidence="1">The heme is bound between the two transmembrane subunits.</text>
</comment>
<comment type="pathway">
    <text>Carbohydrate metabolism; tricarboxylic acid cycle.</text>
</comment>
<comment type="subunit">
    <text evidence="1">Part of an enzyme complex containing four subunits: a flavoprotein, an iron-sulfur protein, plus two membrane-anchoring proteins, SdhC and SdhD.</text>
</comment>
<comment type="subcellular location">
    <subcellularLocation>
        <location>Cell inner membrane</location>
        <topology>Multi-pass membrane protein</topology>
    </subcellularLocation>
</comment>
<proteinExistence type="inferred from homology"/>
<organism>
    <name type="scientific">Rickettsia typhi (strain ATCC VR-144 / Wilmington)</name>
    <dbReference type="NCBI Taxonomy" id="257363"/>
    <lineage>
        <taxon>Bacteria</taxon>
        <taxon>Pseudomonadati</taxon>
        <taxon>Pseudomonadota</taxon>
        <taxon>Alphaproteobacteria</taxon>
        <taxon>Rickettsiales</taxon>
        <taxon>Rickettsiaceae</taxon>
        <taxon>Rickettsieae</taxon>
        <taxon>Rickettsia</taxon>
        <taxon>typhus group</taxon>
    </lineage>
</organism>
<feature type="chain" id="PRO_0000280981" description="Succinate dehydrogenase hydrophobic membrane anchor subunit">
    <location>
        <begin position="1"/>
        <end position="125"/>
    </location>
</feature>
<feature type="topological domain" description="Cytoplasmic" evidence="1">
    <location>
        <begin position="1"/>
        <end position="24"/>
    </location>
</feature>
<feature type="transmembrane region" description="Helical" evidence="1">
    <location>
        <begin position="25"/>
        <end position="45"/>
    </location>
</feature>
<feature type="topological domain" description="Periplasmic" evidence="1">
    <location>
        <begin position="46"/>
        <end position="67"/>
    </location>
</feature>
<feature type="transmembrane region" description="Helical" evidence="1">
    <location>
        <begin position="68"/>
        <end position="89"/>
    </location>
</feature>
<feature type="topological domain" description="Cytoplasmic" evidence="1">
    <location>
        <begin position="90"/>
        <end position="99"/>
    </location>
</feature>
<feature type="transmembrane region" description="Helical" evidence="1">
    <location>
        <begin position="100"/>
        <end position="123"/>
    </location>
</feature>
<feature type="binding site" description="axial binding residue" evidence="1">
    <location>
        <position position="80"/>
    </location>
    <ligand>
        <name>heme</name>
        <dbReference type="ChEBI" id="CHEBI:30413"/>
        <note>ligand shared with second transmembrane subunit</note>
    </ligand>
    <ligandPart>
        <name>Fe</name>
        <dbReference type="ChEBI" id="CHEBI:18248"/>
    </ligandPart>
</feature>
<feature type="binding site" evidence="1">
    <location>
        <position position="92"/>
    </location>
    <ligand>
        <name>a ubiquinone</name>
        <dbReference type="ChEBI" id="CHEBI:16389"/>
    </ligand>
</feature>
<accession>Q68XP0</accession>
<evidence type="ECO:0000250" key="1"/>
<keyword id="KW-0997">Cell inner membrane</keyword>
<keyword id="KW-1003">Cell membrane</keyword>
<keyword id="KW-0249">Electron transport</keyword>
<keyword id="KW-0349">Heme</keyword>
<keyword id="KW-0408">Iron</keyword>
<keyword id="KW-0472">Membrane</keyword>
<keyword id="KW-0479">Metal-binding</keyword>
<keyword id="KW-0812">Transmembrane</keyword>
<keyword id="KW-1133">Transmembrane helix</keyword>
<keyword id="KW-0813">Transport</keyword>
<keyword id="KW-0816">Tricarboxylic acid cycle</keyword>